<sequence>MFNEKDQLAIDTIRALSIDAIEKANSGHPGLPMGAAPMAYTLWTRHLNFNPQSKDFFNRDRFILSAGHGSALLYSLLHVSGSLELEELKQFRQWGSKTPGHPEYRHTDGVEVTTGPLGQGFAMSVGMALAESHLAGKFNKDQFDIVNHYTYVLASDGDLMEGISHEAASFAGHNQLDKLIVLYDSNDISLDGDLDKSFSEDTKQRFEAYGWNYILVENGNDLDEIDNAITQAKSQQGPTIIEVKTIIGFGSPNKAGSNGVHGAPLGEEERALTFKEYGLDPEKRFNVPEDVYEIFKSTMLKRANENEEAWNNMLKNYSEAYPELAEEFKLAMSGKLPNNYADALPEYDLNHSGASRADSGEIIQKLSEFVPSFFGGSADLAGSNKSNVKEAKDYNKDTPEGKNVWFGVREFAMGAAINGMAAHGGLHPYAATFFVFSDYLKPALRLSSIMGLNSTFIFTHDSIAVGEDGPTHEPIEQLAGLRAIPNMNVIRPADGNETRVAWEVALESEQTPTSLVLTRQNLPTLDVDKQTVENGVRKGAYIVFETEQQLEYLLLASGSEVNLAVEAAKELEQQGKGVRVISMPNWYAFEQQSSEYKESILPSDVTKRIAIEMASPLGWHKYVGIEGKVIGINSFGASAPGDLVVEKYGFTKENILKQVRSL</sequence>
<accession>Q5HPJ9</accession>
<feature type="chain" id="PRO_0000191877" description="Transketolase">
    <location>
        <begin position="1"/>
        <end position="662"/>
    </location>
</feature>
<feature type="active site" description="Proton donor" evidence="1">
    <location>
        <position position="410"/>
    </location>
</feature>
<feature type="binding site" evidence="1">
    <location>
        <position position="28"/>
    </location>
    <ligand>
        <name>substrate</name>
    </ligand>
</feature>
<feature type="binding site" evidence="1">
    <location>
        <position position="68"/>
    </location>
    <ligand>
        <name>thiamine diphosphate</name>
        <dbReference type="ChEBI" id="CHEBI:58937"/>
    </ligand>
</feature>
<feature type="binding site" evidence="1">
    <location>
        <begin position="115"/>
        <end position="117"/>
    </location>
    <ligand>
        <name>thiamine diphosphate</name>
        <dbReference type="ChEBI" id="CHEBI:58937"/>
    </ligand>
</feature>
<feature type="binding site" evidence="1">
    <location>
        <position position="156"/>
    </location>
    <ligand>
        <name>Mg(2+)</name>
        <dbReference type="ChEBI" id="CHEBI:18420"/>
    </ligand>
</feature>
<feature type="binding site" evidence="1">
    <location>
        <position position="157"/>
    </location>
    <ligand>
        <name>thiamine diphosphate</name>
        <dbReference type="ChEBI" id="CHEBI:58937"/>
    </ligand>
</feature>
<feature type="binding site" evidence="1">
    <location>
        <position position="186"/>
    </location>
    <ligand>
        <name>Mg(2+)</name>
        <dbReference type="ChEBI" id="CHEBI:18420"/>
    </ligand>
</feature>
<feature type="binding site" evidence="1">
    <location>
        <position position="186"/>
    </location>
    <ligand>
        <name>thiamine diphosphate</name>
        <dbReference type="ChEBI" id="CHEBI:58937"/>
    </ligand>
</feature>
<feature type="binding site" evidence="1">
    <location>
        <position position="188"/>
    </location>
    <ligand>
        <name>Mg(2+)</name>
        <dbReference type="ChEBI" id="CHEBI:18420"/>
    </ligand>
</feature>
<feature type="binding site" evidence="1">
    <location>
        <position position="261"/>
    </location>
    <ligand>
        <name>substrate</name>
    </ligand>
</feature>
<feature type="binding site" evidence="1">
    <location>
        <position position="261"/>
    </location>
    <ligand>
        <name>thiamine diphosphate</name>
        <dbReference type="ChEBI" id="CHEBI:58937"/>
    </ligand>
</feature>
<feature type="binding site" evidence="1">
    <location>
        <position position="356"/>
    </location>
    <ligand>
        <name>substrate</name>
    </ligand>
</feature>
<feature type="binding site" evidence="1">
    <location>
        <position position="383"/>
    </location>
    <ligand>
        <name>substrate</name>
    </ligand>
</feature>
<feature type="binding site" evidence="1">
    <location>
        <position position="436"/>
    </location>
    <ligand>
        <name>thiamine diphosphate</name>
        <dbReference type="ChEBI" id="CHEBI:58937"/>
    </ligand>
</feature>
<feature type="binding site" evidence="1">
    <location>
        <position position="460"/>
    </location>
    <ligand>
        <name>substrate</name>
    </ligand>
</feature>
<feature type="binding site" evidence="1">
    <location>
        <position position="468"/>
    </location>
    <ligand>
        <name>substrate</name>
    </ligand>
</feature>
<feature type="binding site" evidence="1">
    <location>
        <position position="519"/>
    </location>
    <ligand>
        <name>substrate</name>
    </ligand>
</feature>
<feature type="site" description="Important for catalytic activity" evidence="1">
    <location>
        <position position="28"/>
    </location>
</feature>
<feature type="site" description="Important for catalytic activity" evidence="1">
    <location>
        <position position="261"/>
    </location>
</feature>
<organism>
    <name type="scientific">Staphylococcus epidermidis (strain ATCC 35984 / DSM 28319 / BCRC 17069 / CCUG 31568 / BM 3577 / RP62A)</name>
    <dbReference type="NCBI Taxonomy" id="176279"/>
    <lineage>
        <taxon>Bacteria</taxon>
        <taxon>Bacillati</taxon>
        <taxon>Bacillota</taxon>
        <taxon>Bacilli</taxon>
        <taxon>Bacillales</taxon>
        <taxon>Staphylococcaceae</taxon>
        <taxon>Staphylococcus</taxon>
    </lineage>
</organism>
<proteinExistence type="inferred from homology"/>
<evidence type="ECO:0000250" key="1"/>
<evidence type="ECO:0000305" key="2"/>
<dbReference type="EC" id="2.2.1.1"/>
<dbReference type="EMBL" id="CP000029">
    <property type="protein sequence ID" value="AAW54287.1"/>
    <property type="molecule type" value="Genomic_DNA"/>
</dbReference>
<dbReference type="RefSeq" id="WP_002456536.1">
    <property type="nucleotide sequence ID" value="NC_002976.3"/>
</dbReference>
<dbReference type="SMR" id="Q5HPJ9"/>
<dbReference type="STRING" id="176279.SERP0912"/>
<dbReference type="KEGG" id="ser:SERP0912"/>
<dbReference type="eggNOG" id="COG0021">
    <property type="taxonomic scope" value="Bacteria"/>
</dbReference>
<dbReference type="HOGENOM" id="CLU_009227_0_0_9"/>
<dbReference type="UniPathway" id="UPA00115"/>
<dbReference type="UniPathway" id="UPA00116"/>
<dbReference type="Proteomes" id="UP000000531">
    <property type="component" value="Chromosome"/>
</dbReference>
<dbReference type="GO" id="GO:0005829">
    <property type="term" value="C:cytosol"/>
    <property type="evidence" value="ECO:0007669"/>
    <property type="project" value="TreeGrafter"/>
</dbReference>
<dbReference type="GO" id="GO:0046872">
    <property type="term" value="F:metal ion binding"/>
    <property type="evidence" value="ECO:0007669"/>
    <property type="project" value="UniProtKB-KW"/>
</dbReference>
<dbReference type="GO" id="GO:0004802">
    <property type="term" value="F:transketolase activity"/>
    <property type="evidence" value="ECO:0007669"/>
    <property type="project" value="UniProtKB-EC"/>
</dbReference>
<dbReference type="GO" id="GO:0006310">
    <property type="term" value="P:DNA recombination"/>
    <property type="evidence" value="ECO:0007669"/>
    <property type="project" value="UniProtKB-KW"/>
</dbReference>
<dbReference type="GO" id="GO:0006098">
    <property type="term" value="P:pentose-phosphate shunt"/>
    <property type="evidence" value="ECO:0007669"/>
    <property type="project" value="UniProtKB-UniPathway"/>
</dbReference>
<dbReference type="GO" id="GO:0019253">
    <property type="term" value="P:reductive pentose-phosphate cycle"/>
    <property type="evidence" value="ECO:0007669"/>
    <property type="project" value="UniProtKB-UniPathway"/>
</dbReference>
<dbReference type="CDD" id="cd07033">
    <property type="entry name" value="TPP_PYR_DXS_TK_like"/>
    <property type="match status" value="1"/>
</dbReference>
<dbReference type="CDD" id="cd02012">
    <property type="entry name" value="TPP_TK"/>
    <property type="match status" value="1"/>
</dbReference>
<dbReference type="FunFam" id="3.40.50.920:FF:000003">
    <property type="entry name" value="Transketolase"/>
    <property type="match status" value="1"/>
</dbReference>
<dbReference type="FunFam" id="3.40.50.970:FF:000003">
    <property type="entry name" value="Transketolase"/>
    <property type="match status" value="1"/>
</dbReference>
<dbReference type="FunFam" id="3.40.50.970:FF:000081">
    <property type="entry name" value="Transketolase"/>
    <property type="match status" value="1"/>
</dbReference>
<dbReference type="Gene3D" id="3.40.50.920">
    <property type="match status" value="1"/>
</dbReference>
<dbReference type="Gene3D" id="3.40.50.970">
    <property type="match status" value="2"/>
</dbReference>
<dbReference type="InterPro" id="IPR029061">
    <property type="entry name" value="THDP-binding"/>
</dbReference>
<dbReference type="InterPro" id="IPR009014">
    <property type="entry name" value="Transketo_C/PFOR_II"/>
</dbReference>
<dbReference type="InterPro" id="IPR055152">
    <property type="entry name" value="Transketolase-like_C_2"/>
</dbReference>
<dbReference type="InterPro" id="IPR005475">
    <property type="entry name" value="Transketolase-like_Pyr-bd"/>
</dbReference>
<dbReference type="InterPro" id="IPR005478">
    <property type="entry name" value="Transketolase_bac-like"/>
</dbReference>
<dbReference type="InterPro" id="IPR020826">
    <property type="entry name" value="Transketolase_BS"/>
</dbReference>
<dbReference type="InterPro" id="IPR049557">
    <property type="entry name" value="Transketolase_CS"/>
</dbReference>
<dbReference type="InterPro" id="IPR033247">
    <property type="entry name" value="Transketolase_fam"/>
</dbReference>
<dbReference type="InterPro" id="IPR005474">
    <property type="entry name" value="Transketolase_N"/>
</dbReference>
<dbReference type="NCBIfam" id="TIGR00232">
    <property type="entry name" value="tktlase_bact"/>
    <property type="match status" value="1"/>
</dbReference>
<dbReference type="PANTHER" id="PTHR43522">
    <property type="entry name" value="TRANSKETOLASE"/>
    <property type="match status" value="1"/>
</dbReference>
<dbReference type="PANTHER" id="PTHR43522:SF2">
    <property type="entry name" value="TRANSKETOLASE 1-RELATED"/>
    <property type="match status" value="1"/>
</dbReference>
<dbReference type="Pfam" id="PF02779">
    <property type="entry name" value="Transket_pyr"/>
    <property type="match status" value="1"/>
</dbReference>
<dbReference type="Pfam" id="PF22613">
    <property type="entry name" value="Transketolase_C_1"/>
    <property type="match status" value="1"/>
</dbReference>
<dbReference type="Pfam" id="PF00456">
    <property type="entry name" value="Transketolase_N"/>
    <property type="match status" value="1"/>
</dbReference>
<dbReference type="SMART" id="SM00861">
    <property type="entry name" value="Transket_pyr"/>
    <property type="match status" value="1"/>
</dbReference>
<dbReference type="SUPFAM" id="SSF52518">
    <property type="entry name" value="Thiamin diphosphate-binding fold (THDP-binding)"/>
    <property type="match status" value="2"/>
</dbReference>
<dbReference type="SUPFAM" id="SSF52922">
    <property type="entry name" value="TK C-terminal domain-like"/>
    <property type="match status" value="1"/>
</dbReference>
<dbReference type="PROSITE" id="PS00801">
    <property type="entry name" value="TRANSKETOLASE_1"/>
    <property type="match status" value="1"/>
</dbReference>
<dbReference type="PROSITE" id="PS00802">
    <property type="entry name" value="TRANSKETOLASE_2"/>
    <property type="match status" value="1"/>
</dbReference>
<protein>
    <recommendedName>
        <fullName>Transketolase</fullName>
        <ecNumber>2.2.1.1</ecNumber>
    </recommendedName>
</protein>
<reference key="1">
    <citation type="journal article" date="2005" name="J. Bacteriol.">
        <title>Insights on evolution of virulence and resistance from the complete genome analysis of an early methicillin-resistant Staphylococcus aureus strain and a biofilm-producing methicillin-resistant Staphylococcus epidermidis strain.</title>
        <authorList>
            <person name="Gill S.R."/>
            <person name="Fouts D.E."/>
            <person name="Archer G.L."/>
            <person name="Mongodin E.F."/>
            <person name="DeBoy R.T."/>
            <person name="Ravel J."/>
            <person name="Paulsen I.T."/>
            <person name="Kolonay J.F."/>
            <person name="Brinkac L.M."/>
            <person name="Beanan M.J."/>
            <person name="Dodson R.J."/>
            <person name="Daugherty S.C."/>
            <person name="Madupu R."/>
            <person name="Angiuoli S.V."/>
            <person name="Durkin A.S."/>
            <person name="Haft D.H."/>
            <person name="Vamathevan J.J."/>
            <person name="Khouri H."/>
            <person name="Utterback T.R."/>
            <person name="Lee C."/>
            <person name="Dimitrov G."/>
            <person name="Jiang L."/>
            <person name="Qin H."/>
            <person name="Weidman J."/>
            <person name="Tran K."/>
            <person name="Kang K.H."/>
            <person name="Hance I.R."/>
            <person name="Nelson K.E."/>
            <person name="Fraser C.M."/>
        </authorList>
    </citation>
    <scope>NUCLEOTIDE SEQUENCE [LARGE SCALE GENOMIC DNA]</scope>
    <source>
        <strain>ATCC 35984 / DSM 28319 / BCRC 17069 / CCUG 31568 / BM 3577 / RP62A</strain>
    </source>
</reference>
<comment type="function">
    <text evidence="1">Catalyzes the transfer of a two-carbon ketol group from a ketose donor to an aldose acceptor, via a covalent intermediate with the cofactor thiamine pyrophosphate.</text>
</comment>
<comment type="catalytic activity">
    <reaction>
        <text>D-sedoheptulose 7-phosphate + D-glyceraldehyde 3-phosphate = aldehydo-D-ribose 5-phosphate + D-xylulose 5-phosphate</text>
        <dbReference type="Rhea" id="RHEA:10508"/>
        <dbReference type="ChEBI" id="CHEBI:57483"/>
        <dbReference type="ChEBI" id="CHEBI:57737"/>
        <dbReference type="ChEBI" id="CHEBI:58273"/>
        <dbReference type="ChEBI" id="CHEBI:59776"/>
        <dbReference type="EC" id="2.2.1.1"/>
    </reaction>
</comment>
<comment type="cofactor">
    <cofactor evidence="1">
        <name>Mg(2+)</name>
        <dbReference type="ChEBI" id="CHEBI:18420"/>
    </cofactor>
    <cofactor evidence="1">
        <name>Ca(2+)</name>
        <dbReference type="ChEBI" id="CHEBI:29108"/>
    </cofactor>
    <cofactor evidence="1">
        <name>Mn(2+)</name>
        <dbReference type="ChEBI" id="CHEBI:29035"/>
    </cofactor>
    <cofactor evidence="1">
        <name>Co(2+)</name>
        <dbReference type="ChEBI" id="CHEBI:48828"/>
    </cofactor>
    <text evidence="1">Binds 1 Mg(2+) ion per subunit. Can also utilize other divalent metal cations, such as Ca(2+), Mn(2+) and Co(2+).</text>
</comment>
<comment type="cofactor">
    <cofactor evidence="1">
        <name>thiamine diphosphate</name>
        <dbReference type="ChEBI" id="CHEBI:58937"/>
    </cofactor>
    <text evidence="1">Binds 1 thiamine pyrophosphate per subunit.</text>
</comment>
<comment type="pathway">
    <text>Carbohydrate biosynthesis; Calvin cycle.</text>
</comment>
<comment type="pathway">
    <text>Carbohydrate degradation; pentose phosphate pathway.</text>
</comment>
<comment type="subunit">
    <text evidence="1">Homodimer.</text>
</comment>
<comment type="similarity">
    <text evidence="2">Belongs to the transketolase family.</text>
</comment>
<gene>
    <name type="primary">tkt</name>
    <name type="ordered locus">SERP0912</name>
</gene>
<name>TKT_STAEQ</name>
<keyword id="KW-0106">Calcium</keyword>
<keyword id="KW-0233">DNA recombination</keyword>
<keyword id="KW-0460">Magnesium</keyword>
<keyword id="KW-0479">Metal-binding</keyword>
<keyword id="KW-1185">Reference proteome</keyword>
<keyword id="KW-0786">Thiamine pyrophosphate</keyword>
<keyword id="KW-0808">Transferase</keyword>